<evidence type="ECO:0000250" key="1"/>
<evidence type="ECO:0000255" key="2"/>
<evidence type="ECO:0000269" key="3">
    <source>
    </source>
</evidence>
<evidence type="ECO:0000305" key="4"/>
<comment type="function">
    <text evidence="3">Catalyzes the cleavage of the C5-C6 bond of 2-hydroxy-6-oxononadienedioate, and probably also 2-hydroxy-6-oxononatrienedioate, a dienol ring fission product of the bacterial meta-cleavage pathway for degradation of phenylpropionic acid.</text>
</comment>
<comment type="catalytic activity">
    <reaction>
        <text>(2Z,4E)-2-hydroxy-6-oxonona-2,4-dienedioate + H2O = (2Z)-2-hydroxypenta-2,4-dienoate + succinate + H(+)</text>
        <dbReference type="Rhea" id="RHEA:34187"/>
        <dbReference type="ChEBI" id="CHEBI:15377"/>
        <dbReference type="ChEBI" id="CHEBI:15378"/>
        <dbReference type="ChEBI" id="CHEBI:30031"/>
        <dbReference type="ChEBI" id="CHEBI:66887"/>
        <dbReference type="ChEBI" id="CHEBI:67152"/>
        <dbReference type="EC" id="3.7.1.14"/>
    </reaction>
</comment>
<comment type="catalytic activity">
    <reaction>
        <text>(2Z,4E,7E)-2-hydroxy-6-oxonona-2,4,7-trienedioate + H2O = (2Z)-2-hydroxypenta-2,4-dienoate + fumarate + H(+)</text>
        <dbReference type="Rhea" id="RHEA:34191"/>
        <dbReference type="ChEBI" id="CHEBI:15377"/>
        <dbReference type="ChEBI" id="CHEBI:15378"/>
        <dbReference type="ChEBI" id="CHEBI:29806"/>
        <dbReference type="ChEBI" id="CHEBI:66888"/>
        <dbReference type="ChEBI" id="CHEBI:67152"/>
        <dbReference type="EC" id="3.7.1.14"/>
    </reaction>
</comment>
<comment type="biophysicochemical properties">
    <kinetics>
        <Vmax evidence="3">5.8 umol/min/mg enzyme with 3-(2,3-dihydroxyphenyl)propanoate (at pH 7.5)</Vmax>
        <Vmax evidence="3">0.4 umol/min/mg enzyme withd 3-methylcatechol (at pH 7.5)</Vmax>
        <Vmax evidence="3">0.1 umol/min/mg enzyme withd 2,3-dihydroxybiphenyl (at pH 7.5)</Vmax>
    </kinetics>
</comment>
<comment type="pathway">
    <text>Aromatic compound metabolism; 3-phenylpropanoate degradation.</text>
</comment>
<comment type="subunit">
    <text evidence="1">Homodimer.</text>
</comment>
<comment type="similarity">
    <text evidence="4">Belongs to the AB hydrolase superfamily. BphD family.</text>
</comment>
<sequence>MSELNESTTSKFVTINEKGLSNFRIHLNDAGEGEAVIMLHGGGPGAGGWSNYYRNIGPFVKAGYRVILQDAPGFNKSDTVVMDEQRGLVNARSVKGMMDVLGIEKAHLVGNSMGGAGALNFALEYPERTGKLILMGPGGLGNSLFTAMPMEGIKLLFKLYAEPSLDTLKQMLNVFLFDQSLITDELVQGRWANIQRNPEHLKNFLLSSQKLPLSSWNVSPRMGEIKAKTLVTWGRDDRFVPLDHGLKLVANMPDAQLHVFPRCGHWAQWEHADAFNRLTLDFLANG</sequence>
<reference key="1">
    <citation type="journal article" date="2002" name="Appl. Environ. Microbiol.">
        <title>Flow cytometry analysis of changes in the DNA content of the polychlorinated biphenyl degrader Comamonas testosteroni TK102: effect of metabolites on cell-cell separation.</title>
        <authorList>
            <person name="Hiraoka Y."/>
            <person name="Yamada T."/>
            <person name="Tone K."/>
            <person name="Futaesaku Y."/>
            <person name="Kimbara K."/>
        </authorList>
    </citation>
    <scope>NUCLEOTIDE SEQUENCE [GENOMIC DNA]</scope>
    <source>
        <strain>TK102</strain>
    </source>
</reference>
<reference key="2">
    <citation type="journal article" date="1999" name="Microbiology">
        <title>Genetic organization and characteristics of the 3-(3-hydroxyphenyl)propionic acid degradation pathway of Comamonas testosteroni TA441.</title>
        <authorList>
            <person name="Arai H."/>
            <person name="Yamamoto T."/>
            <person name="Ohishi T."/>
            <person name="Shimizu T."/>
            <person name="Nakata T."/>
            <person name="Kudo T."/>
        </authorList>
    </citation>
    <scope>FUNCTION IN CATABOLISM OF 2-HYDROXY-6-OXONONADIENEDIOATE</scope>
    <scope>BIOPHYSICOCHEMICAL PROPERTIES</scope>
    <source>
        <strain>TA441</strain>
    </source>
</reference>
<organism>
    <name type="scientific">Comamonas testosteroni</name>
    <name type="common">Pseudomonas testosteroni</name>
    <dbReference type="NCBI Taxonomy" id="285"/>
    <lineage>
        <taxon>Bacteria</taxon>
        <taxon>Pseudomonadati</taxon>
        <taxon>Pseudomonadota</taxon>
        <taxon>Betaproteobacteria</taxon>
        <taxon>Burkholderiales</taxon>
        <taxon>Comamonadaceae</taxon>
        <taxon>Comamonas</taxon>
    </lineage>
</organism>
<gene>
    <name type="primary">mhpC</name>
    <name type="synonym">bphD</name>
</gene>
<name>MHPC_COMTE</name>
<dbReference type="EC" id="3.7.1.14"/>
<dbReference type="EMBL" id="AB086835">
    <property type="protein sequence ID" value="BAC01057.1"/>
    <property type="molecule type" value="Genomic_DNA"/>
</dbReference>
<dbReference type="SMR" id="Q8KZP5"/>
<dbReference type="ESTHER" id="comte-mhpC">
    <property type="family name" value="Carbon-carbon_bond_hydrolase"/>
</dbReference>
<dbReference type="MEROPS" id="S33.016"/>
<dbReference type="UniPathway" id="UPA00714"/>
<dbReference type="GO" id="GO:0016020">
    <property type="term" value="C:membrane"/>
    <property type="evidence" value="ECO:0007669"/>
    <property type="project" value="TreeGrafter"/>
</dbReference>
<dbReference type="GO" id="GO:0052823">
    <property type="term" value="F:2-hydroxy-6-oxonona-2,4,7-trienedioate hydrolase activity"/>
    <property type="evidence" value="ECO:0007669"/>
    <property type="project" value="RHEA"/>
</dbReference>
<dbReference type="GO" id="GO:0018771">
    <property type="term" value="F:2-hydroxy-6-oxonona-2,4-dienedioate hydrolase activity"/>
    <property type="evidence" value="ECO:0007669"/>
    <property type="project" value="UniProtKB-UniRule"/>
</dbReference>
<dbReference type="GO" id="GO:0019380">
    <property type="term" value="P:3-phenylpropionate catabolic process"/>
    <property type="evidence" value="ECO:0007669"/>
    <property type="project" value="UniProtKB-UniPathway"/>
</dbReference>
<dbReference type="GO" id="GO:0070980">
    <property type="term" value="P:biphenyl catabolic process"/>
    <property type="evidence" value="ECO:0007669"/>
    <property type="project" value="UniProtKB-UniRule"/>
</dbReference>
<dbReference type="Gene3D" id="3.40.50.1820">
    <property type="entry name" value="alpha/beta hydrolase"/>
    <property type="match status" value="1"/>
</dbReference>
<dbReference type="HAMAP" id="MF_01688">
    <property type="entry name" value="Biphenyl_BphD"/>
    <property type="match status" value="1"/>
</dbReference>
<dbReference type="InterPro" id="IPR000073">
    <property type="entry name" value="AB_hydrolase_1"/>
</dbReference>
<dbReference type="InterPro" id="IPR029058">
    <property type="entry name" value="AB_hydrolase_fold"/>
</dbReference>
<dbReference type="InterPro" id="IPR050266">
    <property type="entry name" value="AB_hydrolase_sf"/>
</dbReference>
<dbReference type="InterPro" id="IPR017727">
    <property type="entry name" value="HOPD_hydrolase_BphD"/>
</dbReference>
<dbReference type="NCBIfam" id="TIGR03343">
    <property type="entry name" value="biphenyl_bphD"/>
    <property type="match status" value="1"/>
</dbReference>
<dbReference type="PANTHER" id="PTHR43798:SF33">
    <property type="entry name" value="HYDROLASE, PUTATIVE (AFU_ORTHOLOGUE AFUA_2G14860)-RELATED"/>
    <property type="match status" value="1"/>
</dbReference>
<dbReference type="PANTHER" id="PTHR43798">
    <property type="entry name" value="MONOACYLGLYCEROL LIPASE"/>
    <property type="match status" value="1"/>
</dbReference>
<dbReference type="Pfam" id="PF00561">
    <property type="entry name" value="Abhydrolase_1"/>
    <property type="match status" value="1"/>
</dbReference>
<dbReference type="PRINTS" id="PR00111">
    <property type="entry name" value="ABHYDROLASE"/>
</dbReference>
<dbReference type="SUPFAM" id="SSF53474">
    <property type="entry name" value="alpha/beta-Hydrolases"/>
    <property type="match status" value="1"/>
</dbReference>
<feature type="chain" id="PRO_0000337777" description="2-hydroxy-6-oxononadienedioate/2-hydroxy-6-oxononatrienedioate hydrolase">
    <location>
        <begin position="1"/>
        <end position="286"/>
    </location>
</feature>
<feature type="domain" description="AB hydrolase-1" evidence="2">
    <location>
        <begin position="36"/>
        <end position="271"/>
    </location>
</feature>
<feature type="active site" description="Proton acceptor" evidence="1">
    <location>
        <position position="265"/>
    </location>
</feature>
<feature type="site" description="Transition state stabilizer" evidence="1">
    <location>
        <position position="112"/>
    </location>
</feature>
<feature type="site" description="Catalytic role in ketonization of the dienol substrate (substrate destabilization)" evidence="1">
    <location>
        <position position="190"/>
    </location>
</feature>
<keyword id="KW-0058">Aromatic hydrocarbons catabolism</keyword>
<keyword id="KW-0378">Hydrolase</keyword>
<accession>Q8KZP5</accession>
<protein>
    <recommendedName>
        <fullName>2-hydroxy-6-oxononadienedioate/2-hydroxy-6-oxononatrienedioate hydrolase</fullName>
        <ecNumber>3.7.1.14</ecNumber>
    </recommendedName>
    <alternativeName>
        <fullName>2-hydroxy-6-ketonona-2,4-diene-1,9-dioic acid 5,6-hydrolase</fullName>
    </alternativeName>
    <alternativeName>
        <fullName>2-hydroxy-6-oxonona-2,4,7-triene-1,9-dioic acid 5,6-hydrolase</fullName>
    </alternativeName>
    <alternativeName>
        <fullName>2-hydroxy-6-oxonona-2,4-diene-1,9-dioic acid 5,6-hydrolase</fullName>
    </alternativeName>
</protein>
<proteinExistence type="evidence at protein level"/>